<keyword id="KW-0067">ATP-binding</keyword>
<keyword id="KW-0418">Kinase</keyword>
<keyword id="KW-0460">Magnesium</keyword>
<keyword id="KW-0479">Metal-binding</keyword>
<keyword id="KW-0547">Nucleotide-binding</keyword>
<keyword id="KW-0711">Selenium</keyword>
<keyword id="KW-0808">Transferase</keyword>
<sequence>MKSFLSSCTTGGCGAKIGPGELSKVLSGLPVFQDPQLLVGFDASDDAAVYQINEDTAIVSTVDFFTPMVEDPRTFGRIAAANALSDVYAMGGSPLFALNLVCYPEREDIQDLGEILAGGAEKLQEAGAVLCGGHSIYDREPKYGLAVTGRLNPRQIWKNNTPQPGDRLILTKPLGVGIVMAALRGEMAEAAAVEAALASMQRLNKYAAEKARDFPIHACTDITGFGLLAHTREMAGGSTTIVLYPSALPYIAQAYTYAQGYLLTAAGQRNRNFMEGAVEFGDTPFPLQELMLDPQTSGGLLLSVPGDCAQEALRAIQETEPQAALIGEVLPRQDFPILLG</sequence>
<protein>
    <recommendedName>
        <fullName evidence="1">Selenide, water dikinase</fullName>
        <ecNumber evidence="1">2.7.9.3</ecNumber>
    </recommendedName>
    <alternativeName>
        <fullName evidence="1">Selenium donor protein</fullName>
    </alternativeName>
    <alternativeName>
        <fullName evidence="1">Selenophosphate synthase</fullName>
    </alternativeName>
</protein>
<gene>
    <name evidence="1" type="primary">selD</name>
    <name type="ordered locus">Dhaf_4589</name>
</gene>
<evidence type="ECO:0000255" key="1">
    <source>
        <dbReference type="HAMAP-Rule" id="MF_00625"/>
    </source>
</evidence>
<feature type="chain" id="PRO_1000147246" description="Selenide, water dikinase">
    <location>
        <begin position="1"/>
        <end position="340"/>
    </location>
</feature>
<feature type="active site" evidence="1">
    <location>
        <position position="13"/>
    </location>
</feature>
<feature type="binding site" description="in other chain" evidence="1">
    <location>
        <position position="16"/>
    </location>
    <ligand>
        <name>ATP</name>
        <dbReference type="ChEBI" id="CHEBI:30616"/>
        <note>ligand shared between dimeric partners</note>
    </ligand>
</feature>
<feature type="binding site" description="in other chain" evidence="1">
    <location>
        <begin position="43"/>
        <end position="45"/>
    </location>
    <ligand>
        <name>ATP</name>
        <dbReference type="ChEBI" id="CHEBI:30616"/>
        <note>ligand shared between dimeric partners</note>
    </ligand>
</feature>
<feature type="binding site" evidence="1">
    <location>
        <position position="46"/>
    </location>
    <ligand>
        <name>Mg(2+)</name>
        <dbReference type="ChEBI" id="CHEBI:18420"/>
    </ligand>
</feature>
<feature type="binding site" description="in other chain" evidence="1">
    <location>
        <position position="63"/>
    </location>
    <ligand>
        <name>ATP</name>
        <dbReference type="ChEBI" id="CHEBI:30616"/>
        <note>ligand shared between dimeric partners</note>
    </ligand>
</feature>
<feature type="binding site" description="in other chain" evidence="1">
    <location>
        <position position="86"/>
    </location>
    <ligand>
        <name>ATP</name>
        <dbReference type="ChEBI" id="CHEBI:30616"/>
        <note>ligand shared between dimeric partners</note>
    </ligand>
</feature>
<feature type="binding site" evidence="1">
    <location>
        <position position="86"/>
    </location>
    <ligand>
        <name>Mg(2+)</name>
        <dbReference type="ChEBI" id="CHEBI:18420"/>
    </ligand>
</feature>
<feature type="binding site" evidence="1">
    <location>
        <begin position="133"/>
        <end position="135"/>
    </location>
    <ligand>
        <name>ATP</name>
        <dbReference type="ChEBI" id="CHEBI:30616"/>
        <note>ligand shared between dimeric partners</note>
    </ligand>
</feature>
<feature type="binding site" evidence="1">
    <location>
        <position position="221"/>
    </location>
    <ligand>
        <name>Mg(2+)</name>
        <dbReference type="ChEBI" id="CHEBI:18420"/>
    </ligand>
</feature>
<feature type="site" description="Important for catalytic activity" evidence="1">
    <location>
        <position position="16"/>
    </location>
</feature>
<comment type="function">
    <text evidence="1">Synthesizes selenophosphate from selenide and ATP.</text>
</comment>
<comment type="catalytic activity">
    <reaction evidence="1">
        <text>hydrogenselenide + ATP + H2O = selenophosphate + AMP + phosphate + 2 H(+)</text>
        <dbReference type="Rhea" id="RHEA:18737"/>
        <dbReference type="ChEBI" id="CHEBI:15377"/>
        <dbReference type="ChEBI" id="CHEBI:15378"/>
        <dbReference type="ChEBI" id="CHEBI:16144"/>
        <dbReference type="ChEBI" id="CHEBI:29317"/>
        <dbReference type="ChEBI" id="CHEBI:30616"/>
        <dbReference type="ChEBI" id="CHEBI:43474"/>
        <dbReference type="ChEBI" id="CHEBI:456215"/>
        <dbReference type="EC" id="2.7.9.3"/>
    </reaction>
</comment>
<comment type="cofactor">
    <cofactor evidence="1">
        <name>Mg(2+)</name>
        <dbReference type="ChEBI" id="CHEBI:18420"/>
    </cofactor>
    <text evidence="1">Binds 1 Mg(2+) ion per monomer.</text>
</comment>
<comment type="subunit">
    <text evidence="1">Homodimer.</text>
</comment>
<comment type="similarity">
    <text evidence="1">Belongs to the selenophosphate synthase 1 family. Class I subfamily.</text>
</comment>
<name>SELD_DESHD</name>
<organism>
    <name type="scientific">Desulfitobacterium hafniense (strain DSM 10664 / DCB-2)</name>
    <dbReference type="NCBI Taxonomy" id="272564"/>
    <lineage>
        <taxon>Bacteria</taxon>
        <taxon>Bacillati</taxon>
        <taxon>Bacillota</taxon>
        <taxon>Clostridia</taxon>
        <taxon>Eubacteriales</taxon>
        <taxon>Desulfitobacteriaceae</taxon>
        <taxon>Desulfitobacterium</taxon>
    </lineage>
</organism>
<proteinExistence type="inferred from homology"/>
<reference key="1">
    <citation type="journal article" date="2012" name="BMC Microbiol.">
        <title>Genome sequence of Desulfitobacterium hafniense DCB-2, a Gram-positive anaerobe capable of dehalogenation and metal reduction.</title>
        <authorList>
            <person name="Kim S.H."/>
            <person name="Harzman C."/>
            <person name="Davis J.K."/>
            <person name="Hutcheson R."/>
            <person name="Broderick J.B."/>
            <person name="Marsh T.L."/>
            <person name="Tiedje J.M."/>
        </authorList>
    </citation>
    <scope>NUCLEOTIDE SEQUENCE [LARGE SCALE GENOMIC DNA]</scope>
    <source>
        <strain>DSM 10664 / DCB-2</strain>
    </source>
</reference>
<dbReference type="EC" id="2.7.9.3" evidence="1"/>
<dbReference type="EMBL" id="CP001336">
    <property type="protein sequence ID" value="ACL22590.1"/>
    <property type="molecule type" value="Genomic_DNA"/>
</dbReference>
<dbReference type="RefSeq" id="WP_015945325.1">
    <property type="nucleotide sequence ID" value="NC_011830.1"/>
</dbReference>
<dbReference type="SMR" id="B8FWU2"/>
<dbReference type="KEGG" id="dhd:Dhaf_4589"/>
<dbReference type="HOGENOM" id="CLU_032859_0_1_9"/>
<dbReference type="Proteomes" id="UP000007726">
    <property type="component" value="Chromosome"/>
</dbReference>
<dbReference type="GO" id="GO:0005737">
    <property type="term" value="C:cytoplasm"/>
    <property type="evidence" value="ECO:0007669"/>
    <property type="project" value="TreeGrafter"/>
</dbReference>
<dbReference type="GO" id="GO:0005524">
    <property type="term" value="F:ATP binding"/>
    <property type="evidence" value="ECO:0007669"/>
    <property type="project" value="UniProtKB-UniRule"/>
</dbReference>
<dbReference type="GO" id="GO:0000287">
    <property type="term" value="F:magnesium ion binding"/>
    <property type="evidence" value="ECO:0007669"/>
    <property type="project" value="UniProtKB-UniRule"/>
</dbReference>
<dbReference type="GO" id="GO:0004756">
    <property type="term" value="F:selenide, water dikinase activity"/>
    <property type="evidence" value="ECO:0007669"/>
    <property type="project" value="UniProtKB-UniRule"/>
</dbReference>
<dbReference type="GO" id="GO:0016260">
    <property type="term" value="P:selenocysteine biosynthetic process"/>
    <property type="evidence" value="ECO:0007669"/>
    <property type="project" value="InterPro"/>
</dbReference>
<dbReference type="CDD" id="cd02195">
    <property type="entry name" value="SelD"/>
    <property type="match status" value="1"/>
</dbReference>
<dbReference type="FunFam" id="3.30.1330.10:FF:000003">
    <property type="entry name" value="Selenide, water dikinase"/>
    <property type="match status" value="1"/>
</dbReference>
<dbReference type="Gene3D" id="3.90.650.10">
    <property type="entry name" value="PurM-like C-terminal domain"/>
    <property type="match status" value="1"/>
</dbReference>
<dbReference type="Gene3D" id="3.30.1330.10">
    <property type="entry name" value="PurM-like, N-terminal domain"/>
    <property type="match status" value="1"/>
</dbReference>
<dbReference type="HAMAP" id="MF_00625">
    <property type="entry name" value="SelD"/>
    <property type="match status" value="1"/>
</dbReference>
<dbReference type="InterPro" id="IPR010918">
    <property type="entry name" value="PurM-like_C_dom"/>
</dbReference>
<dbReference type="InterPro" id="IPR036676">
    <property type="entry name" value="PurM-like_C_sf"/>
</dbReference>
<dbReference type="InterPro" id="IPR016188">
    <property type="entry name" value="PurM-like_N"/>
</dbReference>
<dbReference type="InterPro" id="IPR036921">
    <property type="entry name" value="PurM-like_N_sf"/>
</dbReference>
<dbReference type="InterPro" id="IPR023061">
    <property type="entry name" value="SelD_I"/>
</dbReference>
<dbReference type="InterPro" id="IPR004536">
    <property type="entry name" value="SPS/SelD"/>
</dbReference>
<dbReference type="NCBIfam" id="NF002098">
    <property type="entry name" value="PRK00943.1"/>
    <property type="match status" value="1"/>
</dbReference>
<dbReference type="NCBIfam" id="TIGR00476">
    <property type="entry name" value="selD"/>
    <property type="match status" value="1"/>
</dbReference>
<dbReference type="PANTHER" id="PTHR10256:SF0">
    <property type="entry name" value="INACTIVE SELENIDE, WATER DIKINASE-LIKE PROTEIN-RELATED"/>
    <property type="match status" value="1"/>
</dbReference>
<dbReference type="PANTHER" id="PTHR10256">
    <property type="entry name" value="SELENIDE, WATER DIKINASE"/>
    <property type="match status" value="1"/>
</dbReference>
<dbReference type="Pfam" id="PF00586">
    <property type="entry name" value="AIRS"/>
    <property type="match status" value="1"/>
</dbReference>
<dbReference type="Pfam" id="PF02769">
    <property type="entry name" value="AIRS_C"/>
    <property type="match status" value="1"/>
</dbReference>
<dbReference type="PIRSF" id="PIRSF036407">
    <property type="entry name" value="Selenphspht_syn"/>
    <property type="match status" value="1"/>
</dbReference>
<dbReference type="SUPFAM" id="SSF56042">
    <property type="entry name" value="PurM C-terminal domain-like"/>
    <property type="match status" value="1"/>
</dbReference>
<dbReference type="SUPFAM" id="SSF55326">
    <property type="entry name" value="PurM N-terminal domain-like"/>
    <property type="match status" value="1"/>
</dbReference>
<accession>B8FWU2</accession>